<keyword id="KW-0002">3D-structure</keyword>
<keyword id="KW-0044">Antibiotic</keyword>
<keyword id="KW-0929">Antimicrobial</keyword>
<keyword id="KW-0078">Bacteriocin</keyword>
<keyword id="KW-0903">Direct protein sequencing</keyword>
<keyword id="KW-0425">Lantibiotic</keyword>
<keyword id="KW-0558">Oxidation</keyword>
<keyword id="KW-0883">Thioether bond</keyword>
<organism>
    <name type="scientific">Actinoplanes garbadinensis</name>
    <dbReference type="NCBI Taxonomy" id="69485"/>
    <lineage>
        <taxon>Bacteria</taxon>
        <taxon>Bacillati</taxon>
        <taxon>Actinomycetota</taxon>
        <taxon>Actinomycetes</taxon>
        <taxon>Micromonosporales</taxon>
        <taxon>Micromonosporaceae</taxon>
        <taxon>Actinoplanes</taxon>
    </lineage>
</organism>
<feature type="propeptide" id="PRO_0000450805" evidence="2">
    <location>
        <begin position="1"/>
        <end position="45"/>
    </location>
</feature>
<feature type="peptide" id="PRO_0000043967" description="Lantibiotic actagardine" evidence="2">
    <location>
        <begin position="46"/>
        <end position="64"/>
    </location>
</feature>
<feature type="cross-link" description="Lanthionine (Ser-Cys)" evidence="2 3">
    <location>
        <begin position="46"/>
        <end position="51"/>
    </location>
</feature>
<feature type="cross-link" description="Beta-methyllanthionine (Thr-Cys)" evidence="2 3">
    <location>
        <begin position="52"/>
        <end position="57"/>
    </location>
</feature>
<feature type="cross-link" description="Beta-methyllanthionine (Thr-Cys)" evidence="2 3">
    <location>
        <begin position="54"/>
        <end position="62"/>
    </location>
</feature>
<feature type="cross-link" description="Beta-methyllanthionine sulfoxide (Thr-Cys)" evidence="2 3">
    <location>
        <begin position="59"/>
        <end position="64"/>
    </location>
</feature>
<feature type="mutagenesis site" description="Decrease in antibacterial activity." evidence="1">
    <original>S</original>
    <variation>A</variation>
    <location>
        <position position="47"/>
    </location>
</feature>
<feature type="mutagenesis site" description="Loss of antibacterial activity." evidence="1">
    <original>G</original>
    <variation>A</variation>
    <location>
        <position position="48"/>
    </location>
</feature>
<feature type="mutagenesis site" description="Loss of antibacterial activity." evidence="1">
    <original>V</original>
    <variation>A</variation>
    <location>
        <position position="50"/>
    </location>
</feature>
<feature type="mutagenesis site" description="Loss of antibacterial activity." evidence="1">
    <original>G</original>
    <variation>A</variation>
    <location>
        <position position="58"/>
    </location>
</feature>
<feature type="mutagenesis site" description="Decrease in antibacterial activity." evidence="1">
    <original>V</original>
    <variation>A</variation>
    <location>
        <position position="60"/>
    </location>
</feature>
<feature type="strand" evidence="11">
    <location>
        <begin position="52"/>
        <end position="62"/>
    </location>
</feature>
<sequence>MSALAIEKSWKDVDLRDGATSHPAGLGFGELTFEDLREDRTIYAASSGWVCTLTIECGTVICAC</sequence>
<gene>
    <name evidence="5" type="primary">garA</name>
</gene>
<name>LANA_ACTGA</name>
<comment type="function">
    <text evidence="1 4">Has potent antibacterial activity against some Gram-positive bacteria (PubMed:19400806). Has good antistreptococcal activity. Inhibits cell wall biosynthesis by binding to lipid II and blocking transglycosylation (PubMed:9449277).</text>
</comment>
<comment type="PTM">
    <text evidence="1 10">Maturation of lantibiotics involves the enzymatic conversion of Thr, and Ser into dehydrated AA by the enzyme garM and the formation of thioether bonds with cysteine (Probable). The 59-64 beta-methyllanthionine thioether bond is oxidized to a sulfoxide by the monooxygenase GarO (PubMed:19400806). This is followed by membrane translocation and cleavage of the modified precursor (Probable).</text>
</comment>
<comment type="PTM">
    <text evidence="1">The sulfoxide group of the 59-64 beta-methyllanthionine thioether bond is mildly important for activity, since the antibacterial activity of deoxyactagardine is marginally lower compared with oxidized actagardine.</text>
</comment>
<comment type="similarity">
    <text evidence="9">Belongs to the type B lantibiotic family.</text>
</comment>
<proteinExistence type="evidence at protein level"/>
<accession>P56650</accession>
<accession>C4NFI0</accession>
<reference key="1">
    <citation type="journal article" date="2009" name="Mol. Microbiol.">
        <title>Organization of the genes encoding the biosynthesis of actagardine and engineering of a variant generation system.</title>
        <authorList>
            <person name="Boakes S."/>
            <person name="Cortes J."/>
            <person name="Appleyard A.N."/>
            <person name="Rudd B.A.M."/>
            <person name="Dawson M.J."/>
        </authorList>
    </citation>
    <scope>NUCLEOTIDE SEQUENCE [GENOMIC DNA]</scope>
    <scope>FUNCTION</scope>
    <scope>MUTAGENESIS OF SER-47; GLY-48; VAL-50; GLY-58 AND VAL-60</scope>
    <source>
        <strain>ATCC 31049 / DSM 44321 / JCM 3248 / KCTC 9533 / NBRC 13995 / NCIMB 12637 / NRRL B-16719 / A/10889</strain>
    </source>
</reference>
<reference key="2">
    <citation type="journal article" date="1990" name="J. Antibiot.">
        <title>Sequence determination of actagardine, a novel lantibiotic, by homonuclear 2D NMR spectroscopy.</title>
        <authorList>
            <person name="Kettenring J.K."/>
            <person name="Malabarba A."/>
            <person name="Vekey K."/>
            <person name="Cavalleri B."/>
        </authorList>
    </citation>
    <scope>PRELIMINARY PROTEIN SEQUENCE OF 47-64</scope>
    <scope>STRUCTURE BY NMR OF 47-64</scope>
    <source>
        <strain>ATCC 31049 / DSM 44321 / JCM 3248 / KCTC 9533 / NBRC 13995 / NCIMB 12637 / NRRL B-16719 / A/10889</strain>
    </source>
</reference>
<reference key="3">
    <citation type="journal article" date="1995" name="Eur. J. Biochem.">
        <title>The tetracyclic lantibiotic actagardine. 1H-NMR and 13C-NMR assignments and revised primary structure.</title>
        <authorList>
            <person name="Zimmermann N."/>
            <person name="Metzger J.W."/>
            <person name="Jung G."/>
        </authorList>
    </citation>
    <scope>PROTEIN SEQUENCE OF 47-64</scope>
    <scope>STRUCTURE BY NMR OF 47-64</scope>
    <scope>CROSS-LINK</scope>
    <source>
        <strain>ATCC 31049 / DSM 44321 / JCM 3248 / KCTC 9533 / NBRC 13995 / NCIMB 12637 / NRRL B-16719 / A/10889</strain>
    </source>
</reference>
<reference key="4">
    <citation type="journal article" date="1998" name="Antimicrob. Agents Chemother.">
        <title>The lantibiotic mersacidin inhibits peptidoglycan synthesis by targeting lipid II.</title>
        <authorList>
            <person name="Broetz H."/>
            <person name="Bierbaum G."/>
            <person name="Leopold K."/>
            <person name="Reynolds P.E."/>
            <person name="Sahl H.G."/>
        </authorList>
    </citation>
    <scope>FUNCTION</scope>
</reference>
<reference key="5">
    <citation type="journal article" date="1997" name="Eur. J. Biochem.">
        <title>The three-dimensional solution structure of the lantibiotic murein-biosynthesis-inhibitor actagardine determined by NMR.</title>
        <authorList>
            <person name="Zimmermann N."/>
            <person name="Jung G."/>
        </authorList>
    </citation>
    <scope>STRUCTURE BY NMR OF 47-64</scope>
    <scope>CROSS-LINK</scope>
</reference>
<dbReference type="EMBL" id="FJ547091">
    <property type="protein sequence ID" value="ACR33052.1"/>
    <property type="molecule type" value="Genomic_DNA"/>
</dbReference>
<dbReference type="PIR" id="A58700">
    <property type="entry name" value="A58700"/>
</dbReference>
<dbReference type="PDB" id="1AJ1">
    <property type="method" value="NMR"/>
    <property type="chains" value="A=47-64"/>
</dbReference>
<dbReference type="PDBsum" id="1AJ1"/>
<dbReference type="SMR" id="P56650"/>
<dbReference type="EvolutionaryTrace" id="P56650"/>
<dbReference type="GO" id="GO:0005102">
    <property type="term" value="F:signaling receptor binding"/>
    <property type="evidence" value="ECO:0007669"/>
    <property type="project" value="UniProtKB-KW"/>
</dbReference>
<dbReference type="GO" id="GO:0042742">
    <property type="term" value="P:defense response to bacterium"/>
    <property type="evidence" value="ECO:0007669"/>
    <property type="project" value="UniProtKB-KW"/>
</dbReference>
<dbReference type="GO" id="GO:0031640">
    <property type="term" value="P:killing of cells of another organism"/>
    <property type="evidence" value="ECO:0007669"/>
    <property type="project" value="UniProtKB-KW"/>
</dbReference>
<evidence type="ECO:0000269" key="1">
    <source>
    </source>
</evidence>
<evidence type="ECO:0000269" key="2">
    <source>
    </source>
</evidence>
<evidence type="ECO:0000269" key="3">
    <source>
    </source>
</evidence>
<evidence type="ECO:0000269" key="4">
    <source>
    </source>
</evidence>
<evidence type="ECO:0000303" key="5">
    <source>
    </source>
</evidence>
<evidence type="ECO:0000303" key="6">
    <source>
    </source>
</evidence>
<evidence type="ECO:0000303" key="7">
    <source>
    </source>
</evidence>
<evidence type="ECO:0000303" key="8">
    <source>
    </source>
</evidence>
<evidence type="ECO:0000305" key="9"/>
<evidence type="ECO:0000305" key="10">
    <source>
    </source>
</evidence>
<evidence type="ECO:0007829" key="11">
    <source>
        <dbReference type="PDB" id="1AJ1"/>
    </source>
</evidence>
<protein>
    <recommendedName>
        <fullName evidence="5 6 7 8">Lantibiotic actagardine</fullName>
    </recommendedName>
    <alternativeName>
        <fullName>Gardimycin</fullName>
    </alternativeName>
</protein>